<comment type="function">
    <text evidence="1">Could be a nuclease involved in processing of the 5'-end of pre-16S rRNA.</text>
</comment>
<comment type="subcellular location">
    <subcellularLocation>
        <location evidence="1">Cytoplasm</location>
    </subcellularLocation>
</comment>
<comment type="similarity">
    <text evidence="1">Belongs to the YqgF nuclease family.</text>
</comment>
<reference key="1">
    <citation type="journal article" date="2006" name="J. Bacteriol.">
        <title>Complete genome sequence of Yersinia pestis strains Antiqua and Nepal516: evidence of gene reduction in an emerging pathogen.</title>
        <authorList>
            <person name="Chain P.S.G."/>
            <person name="Hu P."/>
            <person name="Malfatti S.A."/>
            <person name="Radnedge L."/>
            <person name="Larimer F."/>
            <person name="Vergez L.M."/>
            <person name="Worsham P."/>
            <person name="Chu M.C."/>
            <person name="Andersen G.L."/>
        </authorList>
    </citation>
    <scope>NUCLEOTIDE SEQUENCE [LARGE SCALE GENOMIC DNA]</scope>
    <source>
        <strain>Nepal516</strain>
    </source>
</reference>
<reference key="2">
    <citation type="submission" date="2009-04" db="EMBL/GenBank/DDBJ databases">
        <title>Yersinia pestis Nepal516A whole genome shotgun sequencing project.</title>
        <authorList>
            <person name="Plunkett G. III"/>
            <person name="Anderson B.D."/>
            <person name="Baumler D.J."/>
            <person name="Burland V."/>
            <person name="Cabot E.L."/>
            <person name="Glasner J.D."/>
            <person name="Mau B."/>
            <person name="Neeno-Eckwall E."/>
            <person name="Perna N.T."/>
            <person name="Munk A.C."/>
            <person name="Tapia R."/>
            <person name="Green L.D."/>
            <person name="Rogers Y.C."/>
            <person name="Detter J.C."/>
            <person name="Bruce D.C."/>
            <person name="Brettin T.S."/>
        </authorList>
    </citation>
    <scope>NUCLEOTIDE SEQUENCE [LARGE SCALE GENOMIC DNA]</scope>
    <source>
        <strain>Nepal516</strain>
    </source>
</reference>
<name>YQGF_YERPN</name>
<evidence type="ECO:0000255" key="1">
    <source>
        <dbReference type="HAMAP-Rule" id="MF_00651"/>
    </source>
</evidence>
<proteinExistence type="inferred from homology"/>
<sequence>MANRTIIAFDFGTKSIGVAIGQEVTGTARALTAFKAQDGTPDWQQVEKLLKEWQPNLVVVGLPLNMDGTEQPLTARARRFANRLHGRFGVQVALQDERLSTVEARANLFDRGGYRALDKGSVDAASAVIILESWFDEQAG</sequence>
<keyword id="KW-0963">Cytoplasm</keyword>
<keyword id="KW-0378">Hydrolase</keyword>
<keyword id="KW-0540">Nuclease</keyword>
<keyword id="KW-0690">Ribosome biogenesis</keyword>
<dbReference type="EC" id="3.1.-.-" evidence="1"/>
<dbReference type="EMBL" id="CP000305">
    <property type="protein sequence ID" value="ABG19461.1"/>
    <property type="molecule type" value="Genomic_DNA"/>
</dbReference>
<dbReference type="EMBL" id="ACNQ01000017">
    <property type="protein sequence ID" value="EEO75630.1"/>
    <property type="molecule type" value="Genomic_DNA"/>
</dbReference>
<dbReference type="SMR" id="Q1CEW9"/>
<dbReference type="KEGG" id="ypn:YPN_3134"/>
<dbReference type="HOGENOM" id="CLU_098240_3_0_6"/>
<dbReference type="Proteomes" id="UP000008936">
    <property type="component" value="Chromosome"/>
</dbReference>
<dbReference type="GO" id="GO:0005829">
    <property type="term" value="C:cytosol"/>
    <property type="evidence" value="ECO:0007669"/>
    <property type="project" value="TreeGrafter"/>
</dbReference>
<dbReference type="GO" id="GO:0004518">
    <property type="term" value="F:nuclease activity"/>
    <property type="evidence" value="ECO:0007669"/>
    <property type="project" value="UniProtKB-KW"/>
</dbReference>
<dbReference type="GO" id="GO:0000967">
    <property type="term" value="P:rRNA 5'-end processing"/>
    <property type="evidence" value="ECO:0007669"/>
    <property type="project" value="UniProtKB-UniRule"/>
</dbReference>
<dbReference type="CDD" id="cd16964">
    <property type="entry name" value="YqgF"/>
    <property type="match status" value="1"/>
</dbReference>
<dbReference type="FunFam" id="3.30.420.140:FF:000002">
    <property type="entry name" value="Putative pre-16S rRNA nuclease"/>
    <property type="match status" value="1"/>
</dbReference>
<dbReference type="Gene3D" id="3.30.420.140">
    <property type="entry name" value="YqgF/RNase H-like domain"/>
    <property type="match status" value="1"/>
</dbReference>
<dbReference type="HAMAP" id="MF_00651">
    <property type="entry name" value="Nuclease_YqgF"/>
    <property type="match status" value="1"/>
</dbReference>
<dbReference type="InterPro" id="IPR012337">
    <property type="entry name" value="RNaseH-like_sf"/>
</dbReference>
<dbReference type="InterPro" id="IPR005227">
    <property type="entry name" value="YqgF"/>
</dbReference>
<dbReference type="InterPro" id="IPR006641">
    <property type="entry name" value="YqgF/RNaseH-like_dom"/>
</dbReference>
<dbReference type="InterPro" id="IPR037027">
    <property type="entry name" value="YqgF/RNaseH-like_dom_sf"/>
</dbReference>
<dbReference type="NCBIfam" id="TIGR00250">
    <property type="entry name" value="RNAse_H_YqgF"/>
    <property type="match status" value="1"/>
</dbReference>
<dbReference type="PANTHER" id="PTHR33317">
    <property type="entry name" value="POLYNUCLEOTIDYL TRANSFERASE, RIBONUCLEASE H-LIKE SUPERFAMILY PROTEIN"/>
    <property type="match status" value="1"/>
</dbReference>
<dbReference type="PANTHER" id="PTHR33317:SF4">
    <property type="entry name" value="POLYNUCLEOTIDYL TRANSFERASE, RIBONUCLEASE H-LIKE SUPERFAMILY PROTEIN"/>
    <property type="match status" value="1"/>
</dbReference>
<dbReference type="Pfam" id="PF03652">
    <property type="entry name" value="RuvX"/>
    <property type="match status" value="1"/>
</dbReference>
<dbReference type="SMART" id="SM00732">
    <property type="entry name" value="YqgFc"/>
    <property type="match status" value="1"/>
</dbReference>
<dbReference type="SUPFAM" id="SSF53098">
    <property type="entry name" value="Ribonuclease H-like"/>
    <property type="match status" value="1"/>
</dbReference>
<protein>
    <recommendedName>
        <fullName evidence="1">Putative pre-16S rRNA nuclease</fullName>
        <ecNumber evidence="1">3.1.-.-</ecNumber>
    </recommendedName>
</protein>
<organism>
    <name type="scientific">Yersinia pestis bv. Antiqua (strain Nepal516)</name>
    <dbReference type="NCBI Taxonomy" id="377628"/>
    <lineage>
        <taxon>Bacteria</taxon>
        <taxon>Pseudomonadati</taxon>
        <taxon>Pseudomonadota</taxon>
        <taxon>Gammaproteobacteria</taxon>
        <taxon>Enterobacterales</taxon>
        <taxon>Yersiniaceae</taxon>
        <taxon>Yersinia</taxon>
    </lineage>
</organism>
<accession>Q1CEW9</accession>
<accession>C4GXI0</accession>
<gene>
    <name evidence="1" type="primary">yqgF</name>
    <name type="ordered locus">YPN_3134</name>
    <name type="ORF">YP516_3561</name>
</gene>
<feature type="chain" id="PRO_0000257620" description="Putative pre-16S rRNA nuclease">
    <location>
        <begin position="1"/>
        <end position="140"/>
    </location>
</feature>